<proteinExistence type="evidence at protein level"/>
<sequence length="146" mass="16308">VHWSAEEKQLITGLWGKVNVADCGAEALARLLIVYPWTERFFSSFGNLSSPTAIIGNPMVRAHGKKVLTSFGEAVKNLDNIKNTFAQLSELHCDKLHVDPENFRLLGDILIIVLAAHFSKDFTPDCQAAWQKLVRVVAHALARKYH</sequence>
<organism>
    <name type="scientific">Anseranas semipalmata</name>
    <name type="common">Magpie goose</name>
    <name type="synonym">Anas semipalmata</name>
    <dbReference type="NCBI Taxonomy" id="8851"/>
    <lineage>
        <taxon>Eukaryota</taxon>
        <taxon>Metazoa</taxon>
        <taxon>Chordata</taxon>
        <taxon>Craniata</taxon>
        <taxon>Vertebrata</taxon>
        <taxon>Euteleostomi</taxon>
        <taxon>Archelosauria</taxon>
        <taxon>Archosauria</taxon>
        <taxon>Dinosauria</taxon>
        <taxon>Saurischia</taxon>
        <taxon>Theropoda</taxon>
        <taxon>Coelurosauria</taxon>
        <taxon>Aves</taxon>
        <taxon>Neognathae</taxon>
        <taxon>Galloanserae</taxon>
        <taxon>Anseriformes</taxon>
        <taxon>Anseranatidae</taxon>
        <taxon>Anseranas</taxon>
    </lineage>
</organism>
<comment type="function">
    <text>Involved in oxygen transport from the lung to the various peripheral tissues.</text>
</comment>
<comment type="subunit">
    <text>Heterotetramer of two alpha chains and two beta chains.</text>
</comment>
<comment type="tissue specificity">
    <text>Red blood cells.</text>
</comment>
<comment type="similarity">
    <text evidence="1">Belongs to the globin family.</text>
</comment>
<dbReference type="PIR" id="A02440">
    <property type="entry name" value="HBGSS"/>
</dbReference>
<dbReference type="SMR" id="P02120"/>
<dbReference type="GO" id="GO:0072562">
    <property type="term" value="C:blood microparticle"/>
    <property type="evidence" value="ECO:0007669"/>
    <property type="project" value="TreeGrafter"/>
</dbReference>
<dbReference type="GO" id="GO:0031838">
    <property type="term" value="C:haptoglobin-hemoglobin complex"/>
    <property type="evidence" value="ECO:0007669"/>
    <property type="project" value="TreeGrafter"/>
</dbReference>
<dbReference type="GO" id="GO:0005833">
    <property type="term" value="C:hemoglobin complex"/>
    <property type="evidence" value="ECO:0007669"/>
    <property type="project" value="InterPro"/>
</dbReference>
<dbReference type="GO" id="GO:0031720">
    <property type="term" value="F:haptoglobin binding"/>
    <property type="evidence" value="ECO:0007669"/>
    <property type="project" value="TreeGrafter"/>
</dbReference>
<dbReference type="GO" id="GO:0020037">
    <property type="term" value="F:heme binding"/>
    <property type="evidence" value="ECO:0007669"/>
    <property type="project" value="InterPro"/>
</dbReference>
<dbReference type="GO" id="GO:0046872">
    <property type="term" value="F:metal ion binding"/>
    <property type="evidence" value="ECO:0007669"/>
    <property type="project" value="UniProtKB-KW"/>
</dbReference>
<dbReference type="GO" id="GO:0043177">
    <property type="term" value="F:organic acid binding"/>
    <property type="evidence" value="ECO:0007669"/>
    <property type="project" value="TreeGrafter"/>
</dbReference>
<dbReference type="GO" id="GO:0019825">
    <property type="term" value="F:oxygen binding"/>
    <property type="evidence" value="ECO:0007669"/>
    <property type="project" value="InterPro"/>
</dbReference>
<dbReference type="GO" id="GO:0005344">
    <property type="term" value="F:oxygen carrier activity"/>
    <property type="evidence" value="ECO:0007669"/>
    <property type="project" value="UniProtKB-KW"/>
</dbReference>
<dbReference type="GO" id="GO:0004601">
    <property type="term" value="F:peroxidase activity"/>
    <property type="evidence" value="ECO:0007669"/>
    <property type="project" value="TreeGrafter"/>
</dbReference>
<dbReference type="GO" id="GO:0042744">
    <property type="term" value="P:hydrogen peroxide catabolic process"/>
    <property type="evidence" value="ECO:0007669"/>
    <property type="project" value="TreeGrafter"/>
</dbReference>
<dbReference type="CDD" id="cd08925">
    <property type="entry name" value="Hb-beta-like"/>
    <property type="match status" value="1"/>
</dbReference>
<dbReference type="FunFam" id="1.10.490.10:FF:000001">
    <property type="entry name" value="Hemoglobin subunit beta"/>
    <property type="match status" value="1"/>
</dbReference>
<dbReference type="Gene3D" id="1.10.490.10">
    <property type="entry name" value="Globins"/>
    <property type="match status" value="1"/>
</dbReference>
<dbReference type="InterPro" id="IPR000971">
    <property type="entry name" value="Globin"/>
</dbReference>
<dbReference type="InterPro" id="IPR009050">
    <property type="entry name" value="Globin-like_sf"/>
</dbReference>
<dbReference type="InterPro" id="IPR012292">
    <property type="entry name" value="Globin/Proto"/>
</dbReference>
<dbReference type="InterPro" id="IPR002337">
    <property type="entry name" value="Hemoglobin_b"/>
</dbReference>
<dbReference type="InterPro" id="IPR050056">
    <property type="entry name" value="Hemoglobin_oxygen_transport"/>
</dbReference>
<dbReference type="PANTHER" id="PTHR11442">
    <property type="entry name" value="HEMOGLOBIN FAMILY MEMBER"/>
    <property type="match status" value="1"/>
</dbReference>
<dbReference type="PANTHER" id="PTHR11442:SF7">
    <property type="entry name" value="HEMOGLOBIN SUBUNIT EPSILON"/>
    <property type="match status" value="1"/>
</dbReference>
<dbReference type="Pfam" id="PF00042">
    <property type="entry name" value="Globin"/>
    <property type="match status" value="1"/>
</dbReference>
<dbReference type="PRINTS" id="PR00814">
    <property type="entry name" value="BETAHAEM"/>
</dbReference>
<dbReference type="SUPFAM" id="SSF46458">
    <property type="entry name" value="Globin-like"/>
    <property type="match status" value="1"/>
</dbReference>
<dbReference type="PROSITE" id="PS01033">
    <property type="entry name" value="GLOBIN"/>
    <property type="match status" value="1"/>
</dbReference>
<evidence type="ECO:0000255" key="1">
    <source>
        <dbReference type="PROSITE-ProRule" id="PRU00238"/>
    </source>
</evidence>
<gene>
    <name type="primary">HBB</name>
</gene>
<keyword id="KW-0903">Direct protein sequencing</keyword>
<keyword id="KW-0349">Heme</keyword>
<keyword id="KW-0408">Iron</keyword>
<keyword id="KW-0479">Metal-binding</keyword>
<keyword id="KW-0561">Oxygen transport</keyword>
<keyword id="KW-0813">Transport</keyword>
<feature type="chain" id="PRO_0000052874" description="Hemoglobin subunit beta">
    <location>
        <begin position="1"/>
        <end position="146"/>
    </location>
</feature>
<feature type="domain" description="Globin" evidence="1">
    <location>
        <begin position="2"/>
        <end position="146"/>
    </location>
</feature>
<feature type="binding site" description="distal binding residue">
    <location>
        <position position="63"/>
    </location>
    <ligand>
        <name>heme b</name>
        <dbReference type="ChEBI" id="CHEBI:60344"/>
    </ligand>
    <ligandPart>
        <name>Fe</name>
        <dbReference type="ChEBI" id="CHEBI:18248"/>
    </ligandPart>
</feature>
<feature type="binding site" description="proximal binding residue">
    <location>
        <position position="92"/>
    </location>
    <ligand>
        <name>heme b</name>
        <dbReference type="ChEBI" id="CHEBI:60344"/>
    </ligand>
    <ligandPart>
        <name>Fe</name>
        <dbReference type="ChEBI" id="CHEBI:18248"/>
    </ligandPart>
</feature>
<reference key="1">
    <citation type="journal article" date="1983" name="Hoppe-Seyler's Z. Physiol. Chem.">
        <title>Primary structure of alpha and beta chains from the major hemoglobin component of the magpie goose (Anseranas semipalmata, Anatidae).</title>
        <authorList>
            <person name="Oberthur W."/>
            <person name="Wiesner H."/>
            <person name="Braunitzer G."/>
        </authorList>
    </citation>
    <scope>PROTEIN SEQUENCE</scope>
</reference>
<accession>P02120</accession>
<name>HBB_ANSSE</name>
<protein>
    <recommendedName>
        <fullName>Hemoglobin subunit beta</fullName>
    </recommendedName>
    <alternativeName>
        <fullName>Beta-globin</fullName>
    </alternativeName>
    <alternativeName>
        <fullName>Hemoglobin beta chain</fullName>
    </alternativeName>
</protein>